<sequence>MSLEAFHHSEPLTLGVELELQLVNTHNYDLAPYAEDMLRLMARQPLPGSVVPEMTNSMIEVSTGICHSGSEVLGQLTQIRDALVRSADKLNIAVVGGGTHPFQQWHERRIYDKPRFQELSQLYGYLSKQFTIFGQHVHIGCPDADAALLMLHRMSRYIPHFIALSASSPYVQGQDTAFDSARLNSVFAFPLSGRAPMVLTWKDFEAYFDKMTRTGVVKSMKDFYWDIRPKPEFGTIEIRVFDTPLTIERAAALSAFVQSLGAWFLAEQPFTPSEDDYLVYTYNRFQACRFGMQAVYVDPATGEHMPLRDHILQTIDHIARHATVTGASGALHLLRSEAAAGQNDARWLRDRQRDEQLLGEVSRQAALRFRGAPA</sequence>
<protein>
    <recommendedName>
        <fullName evidence="1">Putative glutamate--cysteine ligase 2</fullName>
        <ecNumber evidence="1">6.3.2.2</ecNumber>
    </recommendedName>
    <alternativeName>
        <fullName evidence="1">Gamma-glutamylcysteine synthetase 2</fullName>
        <shortName evidence="1">GCS 2</shortName>
        <shortName evidence="1">Gamma-GCS 2</shortName>
    </alternativeName>
</protein>
<gene>
    <name type="ordered locus">Aave_0434</name>
</gene>
<reference key="1">
    <citation type="submission" date="2006-12" db="EMBL/GenBank/DDBJ databases">
        <title>Complete sequence of Acidovorax avenae subsp. citrulli AAC00-1.</title>
        <authorList>
            <person name="Copeland A."/>
            <person name="Lucas S."/>
            <person name="Lapidus A."/>
            <person name="Barry K."/>
            <person name="Detter J.C."/>
            <person name="Glavina del Rio T."/>
            <person name="Dalin E."/>
            <person name="Tice H."/>
            <person name="Pitluck S."/>
            <person name="Kiss H."/>
            <person name="Brettin T."/>
            <person name="Bruce D."/>
            <person name="Han C."/>
            <person name="Tapia R."/>
            <person name="Gilna P."/>
            <person name="Schmutz J."/>
            <person name="Larimer F."/>
            <person name="Land M."/>
            <person name="Hauser L."/>
            <person name="Kyrpides N."/>
            <person name="Kim E."/>
            <person name="Stahl D."/>
            <person name="Richardson P."/>
        </authorList>
    </citation>
    <scope>NUCLEOTIDE SEQUENCE [LARGE SCALE GENOMIC DNA]</scope>
    <source>
        <strain>AAC00-1</strain>
    </source>
</reference>
<dbReference type="EC" id="6.3.2.2" evidence="1"/>
<dbReference type="EMBL" id="CP000512">
    <property type="protein sequence ID" value="ABM31041.1"/>
    <property type="molecule type" value="Genomic_DNA"/>
</dbReference>
<dbReference type="RefSeq" id="WP_011793617.1">
    <property type="nucleotide sequence ID" value="NC_008752.1"/>
</dbReference>
<dbReference type="SMR" id="A1TJA3"/>
<dbReference type="STRING" id="397945.Aave_0434"/>
<dbReference type="GeneID" id="79790245"/>
<dbReference type="KEGG" id="aav:Aave_0434"/>
<dbReference type="eggNOG" id="COG2170">
    <property type="taxonomic scope" value="Bacteria"/>
</dbReference>
<dbReference type="HOGENOM" id="CLU_044848_1_1_4"/>
<dbReference type="OrthoDB" id="9769628at2"/>
<dbReference type="Proteomes" id="UP000002596">
    <property type="component" value="Chromosome"/>
</dbReference>
<dbReference type="GO" id="GO:0005524">
    <property type="term" value="F:ATP binding"/>
    <property type="evidence" value="ECO:0007669"/>
    <property type="project" value="UniProtKB-KW"/>
</dbReference>
<dbReference type="GO" id="GO:0004357">
    <property type="term" value="F:glutamate-cysteine ligase activity"/>
    <property type="evidence" value="ECO:0007669"/>
    <property type="project" value="UniProtKB-EC"/>
</dbReference>
<dbReference type="GO" id="GO:0042398">
    <property type="term" value="P:modified amino acid biosynthetic process"/>
    <property type="evidence" value="ECO:0007669"/>
    <property type="project" value="InterPro"/>
</dbReference>
<dbReference type="Gene3D" id="3.30.590.20">
    <property type="match status" value="1"/>
</dbReference>
<dbReference type="HAMAP" id="MF_01609">
    <property type="entry name" value="Glu_cys_ligase_2"/>
    <property type="match status" value="1"/>
</dbReference>
<dbReference type="InterPro" id="IPR050141">
    <property type="entry name" value="GCL_type2/YbdK_subfam"/>
</dbReference>
<dbReference type="InterPro" id="IPR006336">
    <property type="entry name" value="GCS2"/>
</dbReference>
<dbReference type="InterPro" id="IPR014746">
    <property type="entry name" value="Gln_synth/guanido_kin_cat_dom"/>
</dbReference>
<dbReference type="InterPro" id="IPR011793">
    <property type="entry name" value="YbdK"/>
</dbReference>
<dbReference type="NCBIfam" id="TIGR02050">
    <property type="entry name" value="gshA_cyan_rel"/>
    <property type="match status" value="1"/>
</dbReference>
<dbReference type="NCBIfam" id="NF010040">
    <property type="entry name" value="PRK13516.1"/>
    <property type="match status" value="1"/>
</dbReference>
<dbReference type="PANTHER" id="PTHR36510">
    <property type="entry name" value="GLUTAMATE--CYSTEINE LIGASE 2-RELATED"/>
    <property type="match status" value="1"/>
</dbReference>
<dbReference type="PANTHER" id="PTHR36510:SF1">
    <property type="entry name" value="GLUTAMATE--CYSTEINE LIGASE 2-RELATED"/>
    <property type="match status" value="1"/>
</dbReference>
<dbReference type="Pfam" id="PF04107">
    <property type="entry name" value="GCS2"/>
    <property type="match status" value="1"/>
</dbReference>
<dbReference type="SUPFAM" id="SSF55931">
    <property type="entry name" value="Glutamine synthetase/guanido kinase"/>
    <property type="match status" value="1"/>
</dbReference>
<keyword id="KW-0067">ATP-binding</keyword>
<keyword id="KW-0436">Ligase</keyword>
<keyword id="KW-0547">Nucleotide-binding</keyword>
<name>GCS2_PARC0</name>
<feature type="chain" id="PRO_0000291478" description="Putative glutamate--cysteine ligase 2">
    <location>
        <begin position="1"/>
        <end position="374"/>
    </location>
</feature>
<proteinExistence type="inferred from homology"/>
<comment type="function">
    <text evidence="1">ATP-dependent carboxylate-amine ligase which exhibits weak glutamate--cysteine ligase activity.</text>
</comment>
<comment type="catalytic activity">
    <reaction evidence="1">
        <text>L-cysteine + L-glutamate + ATP = gamma-L-glutamyl-L-cysteine + ADP + phosphate + H(+)</text>
        <dbReference type="Rhea" id="RHEA:13285"/>
        <dbReference type="ChEBI" id="CHEBI:15378"/>
        <dbReference type="ChEBI" id="CHEBI:29985"/>
        <dbReference type="ChEBI" id="CHEBI:30616"/>
        <dbReference type="ChEBI" id="CHEBI:35235"/>
        <dbReference type="ChEBI" id="CHEBI:43474"/>
        <dbReference type="ChEBI" id="CHEBI:58173"/>
        <dbReference type="ChEBI" id="CHEBI:456216"/>
        <dbReference type="EC" id="6.3.2.2"/>
    </reaction>
</comment>
<comment type="similarity">
    <text evidence="1">Belongs to the glutamate--cysteine ligase type 2 family. YbdK subfamily.</text>
</comment>
<organism>
    <name type="scientific">Paracidovorax citrulli (strain AAC00-1)</name>
    <name type="common">Acidovorax citrulli</name>
    <dbReference type="NCBI Taxonomy" id="397945"/>
    <lineage>
        <taxon>Bacteria</taxon>
        <taxon>Pseudomonadati</taxon>
        <taxon>Pseudomonadota</taxon>
        <taxon>Betaproteobacteria</taxon>
        <taxon>Burkholderiales</taxon>
        <taxon>Comamonadaceae</taxon>
        <taxon>Paracidovorax</taxon>
    </lineage>
</organism>
<evidence type="ECO:0000255" key="1">
    <source>
        <dbReference type="HAMAP-Rule" id="MF_01609"/>
    </source>
</evidence>
<accession>A1TJA3</accession>